<keyword id="KW-0297">G-protein coupled receptor</keyword>
<keyword id="KW-0325">Glycoprotein</keyword>
<keyword id="KW-0472">Membrane</keyword>
<keyword id="KW-0675">Receptor</keyword>
<keyword id="KW-1185">Reference proteome</keyword>
<keyword id="KW-0716">Sensory transduction</keyword>
<keyword id="KW-0919">Taste</keyword>
<keyword id="KW-0807">Transducer</keyword>
<keyword id="KW-0812">Transmembrane</keyword>
<keyword id="KW-1133">Transmembrane helix</keyword>
<proteinExistence type="inferred from homology"/>
<protein>
    <recommendedName>
        <fullName>Taste receptor type 2 member 3</fullName>
        <shortName>T2R3</shortName>
    </recommendedName>
</protein>
<dbReference type="EMBL" id="AY724896">
    <property type="protein sequence ID" value="AAU21112.1"/>
    <property type="molecule type" value="Genomic_DNA"/>
</dbReference>
<dbReference type="RefSeq" id="NP_001009105.1">
    <property type="nucleotide sequence ID" value="NM_001009105.1"/>
</dbReference>
<dbReference type="SMR" id="Q646A7"/>
<dbReference type="FunCoup" id="Q646A7">
    <property type="interactions" value="233"/>
</dbReference>
<dbReference type="STRING" id="9598.ENSPTRP00000054266"/>
<dbReference type="GlyCosmos" id="Q646A7">
    <property type="glycosylation" value="1 site, No reported glycans"/>
</dbReference>
<dbReference type="PaxDb" id="9598-ENSPTRP00000054266"/>
<dbReference type="GeneID" id="463871"/>
<dbReference type="KEGG" id="ptr:463871"/>
<dbReference type="CTD" id="50831"/>
<dbReference type="eggNOG" id="ENOG502SKRK">
    <property type="taxonomic scope" value="Eukaryota"/>
</dbReference>
<dbReference type="InParanoid" id="Q646A7"/>
<dbReference type="OrthoDB" id="13391at9604"/>
<dbReference type="Proteomes" id="UP000002277">
    <property type="component" value="Unplaced"/>
</dbReference>
<dbReference type="GO" id="GO:0016020">
    <property type="term" value="C:membrane"/>
    <property type="evidence" value="ECO:0000318"/>
    <property type="project" value="GO_Central"/>
</dbReference>
<dbReference type="GO" id="GO:0005886">
    <property type="term" value="C:plasma membrane"/>
    <property type="evidence" value="ECO:0007669"/>
    <property type="project" value="UniProtKB-ARBA"/>
</dbReference>
<dbReference type="GO" id="GO:0033038">
    <property type="term" value="F:bitter taste receptor activity"/>
    <property type="evidence" value="ECO:0000318"/>
    <property type="project" value="GO_Central"/>
</dbReference>
<dbReference type="GO" id="GO:0004930">
    <property type="term" value="F:G protein-coupled receptor activity"/>
    <property type="evidence" value="ECO:0007669"/>
    <property type="project" value="UniProtKB-KW"/>
</dbReference>
<dbReference type="GO" id="GO:0001580">
    <property type="term" value="P:detection of chemical stimulus involved in sensory perception of bitter taste"/>
    <property type="evidence" value="ECO:0000318"/>
    <property type="project" value="GO_Central"/>
</dbReference>
<dbReference type="CDD" id="cd15020">
    <property type="entry name" value="7tm_TAS2R3"/>
    <property type="match status" value="1"/>
</dbReference>
<dbReference type="FunFam" id="1.20.1070.10:FF:000042">
    <property type="entry name" value="Taste receptor type 2 member 7"/>
    <property type="match status" value="1"/>
</dbReference>
<dbReference type="Gene3D" id="1.20.1070.10">
    <property type="entry name" value="Rhodopsin 7-helix transmembrane proteins"/>
    <property type="match status" value="1"/>
</dbReference>
<dbReference type="InterPro" id="IPR007960">
    <property type="entry name" value="TAS2R"/>
</dbReference>
<dbReference type="PANTHER" id="PTHR11394">
    <property type="entry name" value="TASTE RECEPTOR TYPE 2"/>
    <property type="match status" value="1"/>
</dbReference>
<dbReference type="PANTHER" id="PTHR11394:SF49">
    <property type="entry name" value="TASTE RECEPTOR TYPE 2 MEMBER 3"/>
    <property type="match status" value="1"/>
</dbReference>
<dbReference type="Pfam" id="PF05296">
    <property type="entry name" value="TAS2R"/>
    <property type="match status" value="1"/>
</dbReference>
<dbReference type="SUPFAM" id="SSF81321">
    <property type="entry name" value="Family A G protein-coupled receptor-like"/>
    <property type="match status" value="1"/>
</dbReference>
<gene>
    <name type="primary">TAS2R3</name>
</gene>
<organism>
    <name type="scientific">Pan troglodytes</name>
    <name type="common">Chimpanzee</name>
    <dbReference type="NCBI Taxonomy" id="9598"/>
    <lineage>
        <taxon>Eukaryota</taxon>
        <taxon>Metazoa</taxon>
        <taxon>Chordata</taxon>
        <taxon>Craniata</taxon>
        <taxon>Vertebrata</taxon>
        <taxon>Euteleostomi</taxon>
        <taxon>Mammalia</taxon>
        <taxon>Eutheria</taxon>
        <taxon>Euarchontoglires</taxon>
        <taxon>Primates</taxon>
        <taxon>Haplorrhini</taxon>
        <taxon>Catarrhini</taxon>
        <taxon>Hominidae</taxon>
        <taxon>Pan</taxon>
    </lineage>
</organism>
<sequence length="315" mass="35784">MGLTEGVFLILSGTQFTLGILVNCFIELVNGSSWFKTKRMSLSDFIITTLALLRIILLCIILTDSFLIEFSPNTHDSGIIMQIIDVSWTFTNHLSIWLATCLGVLYCLKIASFSHPTFLWLKWRVSRVMVWMLLGALLLSCGSTASLINEFKLYSVFRGIEATRNVTEHFRKKRSEYYLIHVLGTLWYLPPLIVSLASYSLLIFSLGRHTRQMLQNGTSSRDPTTEAHKRAIRIILSFFFLFLLYFLAFLIASFGNFLPKTKMAKMIGEVMTMFYPAGHSFILILGNSKLKQTFVVMLRCESGHLKPGSKGPIFS</sequence>
<name>TA2R3_PANTR</name>
<accession>Q646A7</accession>
<evidence type="ECO:0000250" key="1"/>
<evidence type="ECO:0000255" key="2"/>
<evidence type="ECO:0000305" key="3"/>
<feature type="chain" id="PRO_0000082199" description="Taste receptor type 2 member 3">
    <location>
        <begin position="1"/>
        <end position="315"/>
    </location>
</feature>
<feature type="topological domain" description="Extracellular" evidence="2">
    <location>
        <begin position="1"/>
        <end position="5"/>
    </location>
</feature>
<feature type="transmembrane region" description="Helical; Name=1" evidence="2">
    <location>
        <begin position="6"/>
        <end position="26"/>
    </location>
</feature>
<feature type="topological domain" description="Cytoplasmic" evidence="2">
    <location>
        <begin position="27"/>
        <end position="41"/>
    </location>
</feature>
<feature type="transmembrane region" description="Helical; Name=2" evidence="2">
    <location>
        <begin position="42"/>
        <end position="62"/>
    </location>
</feature>
<feature type="topological domain" description="Extracellular" evidence="2">
    <location>
        <begin position="63"/>
        <end position="93"/>
    </location>
</feature>
<feature type="transmembrane region" description="Helical; Name=3" evidence="2">
    <location>
        <begin position="94"/>
        <end position="114"/>
    </location>
</feature>
<feature type="topological domain" description="Cytoplasmic" evidence="2">
    <location>
        <begin position="115"/>
        <end position="127"/>
    </location>
</feature>
<feature type="transmembrane region" description="Helical; Name=4" evidence="2">
    <location>
        <begin position="128"/>
        <end position="148"/>
    </location>
</feature>
<feature type="topological domain" description="Extracellular" evidence="2">
    <location>
        <begin position="149"/>
        <end position="185"/>
    </location>
</feature>
<feature type="transmembrane region" description="Helical; Name=5" evidence="2">
    <location>
        <begin position="186"/>
        <end position="206"/>
    </location>
</feature>
<feature type="topological domain" description="Cytoplasmic" evidence="2">
    <location>
        <begin position="207"/>
        <end position="233"/>
    </location>
</feature>
<feature type="transmembrane region" description="Helical; Name=6" evidence="2">
    <location>
        <begin position="234"/>
        <end position="254"/>
    </location>
</feature>
<feature type="topological domain" description="Extracellular" evidence="2">
    <location>
        <begin position="255"/>
        <end position="265"/>
    </location>
</feature>
<feature type="transmembrane region" description="Helical; Name=7" evidence="2">
    <location>
        <begin position="266"/>
        <end position="286"/>
    </location>
</feature>
<feature type="topological domain" description="Cytoplasmic" evidence="2">
    <location>
        <begin position="287"/>
        <end position="315"/>
    </location>
</feature>
<feature type="glycosylation site" description="N-linked (GlcNAc...) asparagine" evidence="2">
    <location>
        <position position="165"/>
    </location>
</feature>
<comment type="function">
    <text evidence="1">Gustducin-coupled receptor implicated in the perception of bitter compounds in the oral cavity and the gastrointestinal tract. Signals through PLCB2 and the calcium-regulated cation channel TRPM5 (By similarity).</text>
</comment>
<comment type="subcellular location">
    <subcellularLocation>
        <location>Membrane</location>
        <topology>Multi-pass membrane protein</topology>
    </subcellularLocation>
</comment>
<comment type="miscellaneous">
    <text>Several bitter taste receptors are expressed in a single taste receptor cell.</text>
</comment>
<comment type="similarity">
    <text evidence="3">Belongs to the G-protein coupled receptor T2R family.</text>
</comment>
<reference key="1">
    <citation type="journal article" date="2005" name="Mol. Biol. Evol.">
        <title>Evolution of bitter taste receptors in humans and apes.</title>
        <authorList>
            <person name="Fischer A."/>
            <person name="Gilad Y."/>
            <person name="Man O."/>
            <person name="Paeaebo S."/>
        </authorList>
    </citation>
    <scope>NUCLEOTIDE SEQUENCE [GENOMIC DNA]</scope>
</reference>